<dbReference type="EMBL" id="AL078465">
    <property type="protein sequence ID" value="CAB43859.1"/>
    <property type="molecule type" value="Genomic_DNA"/>
</dbReference>
<dbReference type="EMBL" id="AL161565">
    <property type="protein sequence ID" value="CAB79518.1"/>
    <property type="molecule type" value="Genomic_DNA"/>
</dbReference>
<dbReference type="EMBL" id="CP002687">
    <property type="protein sequence ID" value="AEE85228.1"/>
    <property type="molecule type" value="Genomic_DNA"/>
</dbReference>
<dbReference type="EMBL" id="CP002687">
    <property type="protein sequence ID" value="AEE85229.1"/>
    <property type="molecule type" value="Genomic_DNA"/>
</dbReference>
<dbReference type="EMBL" id="AK226545">
    <property type="protein sequence ID" value="BAE98684.1"/>
    <property type="status" value="ALT_FRAME"/>
    <property type="molecule type" value="mRNA"/>
</dbReference>
<dbReference type="EMBL" id="AK227843">
    <property type="protein sequence ID" value="BAE99821.1"/>
    <property type="molecule type" value="mRNA"/>
</dbReference>
<dbReference type="EMBL" id="AK229601">
    <property type="protein sequence ID" value="BAF01448.1"/>
    <property type="molecule type" value="mRNA"/>
</dbReference>
<dbReference type="EMBL" id="AK316775">
    <property type="protein sequence ID" value="BAH19494.1"/>
    <property type="molecule type" value="mRNA"/>
</dbReference>
<dbReference type="EMBL" id="AY093124">
    <property type="protein sequence ID" value="AAM13123.1"/>
    <property type="status" value="ALT_INIT"/>
    <property type="molecule type" value="mRNA"/>
</dbReference>
<dbReference type="EMBL" id="BT008491">
    <property type="protein sequence ID" value="AAP37850.1"/>
    <property type="molecule type" value="mRNA"/>
</dbReference>
<dbReference type="PIR" id="T08929">
    <property type="entry name" value="T08929"/>
</dbReference>
<dbReference type="RefSeq" id="NP_001031724.1">
    <property type="nucleotide sequence ID" value="NM_001036647.3"/>
</dbReference>
<dbReference type="RefSeq" id="NP_194393.3">
    <property type="nucleotide sequence ID" value="NM_118797.5"/>
</dbReference>
<dbReference type="SMR" id="Q9SUA1"/>
<dbReference type="FunCoup" id="Q9SUA1">
    <property type="interactions" value="247"/>
</dbReference>
<dbReference type="IntAct" id="Q9SUA1">
    <property type="interactions" value="19"/>
</dbReference>
<dbReference type="STRING" id="3702.Q9SUA1"/>
<dbReference type="iPTMnet" id="Q9SUA1"/>
<dbReference type="PaxDb" id="3702-AT4G26630.2"/>
<dbReference type="ProteomicsDB" id="183163"/>
<dbReference type="EnsemblPlants" id="AT4G26630.1">
    <property type="protein sequence ID" value="AT4G26630.1"/>
    <property type="gene ID" value="AT4G26630"/>
</dbReference>
<dbReference type="EnsemblPlants" id="AT4G26630.2">
    <property type="protein sequence ID" value="AT4G26630.2"/>
    <property type="gene ID" value="AT4G26630"/>
</dbReference>
<dbReference type="GeneID" id="828770"/>
<dbReference type="Gramene" id="AT4G26630.1">
    <property type="protein sequence ID" value="AT4G26630.1"/>
    <property type="gene ID" value="AT4G26630"/>
</dbReference>
<dbReference type="Gramene" id="AT4G26630.2">
    <property type="protein sequence ID" value="AT4G26630.2"/>
    <property type="gene ID" value="AT4G26630"/>
</dbReference>
<dbReference type="KEGG" id="ath:AT4G26630"/>
<dbReference type="Araport" id="AT4G26630"/>
<dbReference type="TAIR" id="AT4G26630">
    <property type="gene designation" value="DEK3"/>
</dbReference>
<dbReference type="eggNOG" id="KOG2266">
    <property type="taxonomic scope" value="Eukaryota"/>
</dbReference>
<dbReference type="HOGENOM" id="CLU_011980_0_0_1"/>
<dbReference type="InParanoid" id="Q9SUA1"/>
<dbReference type="OMA" id="QLHDAIC"/>
<dbReference type="PhylomeDB" id="Q9SUA1"/>
<dbReference type="CD-CODE" id="4299E36E">
    <property type="entry name" value="Nucleolus"/>
</dbReference>
<dbReference type="PRO" id="PR:Q9SUA1"/>
<dbReference type="Proteomes" id="UP000006548">
    <property type="component" value="Chromosome 4"/>
</dbReference>
<dbReference type="ExpressionAtlas" id="Q9SUA1">
    <property type="expression patterns" value="baseline and differential"/>
</dbReference>
<dbReference type="GO" id="GO:0005829">
    <property type="term" value="C:cytosol"/>
    <property type="evidence" value="ECO:0007005"/>
    <property type="project" value="TAIR"/>
</dbReference>
<dbReference type="GO" id="GO:0005730">
    <property type="term" value="C:nucleolus"/>
    <property type="evidence" value="ECO:0000314"/>
    <property type="project" value="UniProtKB"/>
</dbReference>
<dbReference type="GO" id="GO:0005634">
    <property type="term" value="C:nucleus"/>
    <property type="evidence" value="ECO:0000314"/>
    <property type="project" value="TAIR"/>
</dbReference>
<dbReference type="GO" id="GO:0003682">
    <property type="term" value="F:chromatin binding"/>
    <property type="evidence" value="ECO:0000314"/>
    <property type="project" value="TAIR"/>
</dbReference>
<dbReference type="GO" id="GO:0003677">
    <property type="term" value="F:DNA binding"/>
    <property type="evidence" value="ECO:0007669"/>
    <property type="project" value="UniProtKB-KW"/>
</dbReference>
<dbReference type="GO" id="GO:0042393">
    <property type="term" value="F:histone binding"/>
    <property type="evidence" value="ECO:0000314"/>
    <property type="project" value="UniProtKB"/>
</dbReference>
<dbReference type="GO" id="GO:0006338">
    <property type="term" value="P:chromatin remodeling"/>
    <property type="evidence" value="ECO:0000314"/>
    <property type="project" value="TAIR"/>
</dbReference>
<dbReference type="GO" id="GO:0045892">
    <property type="term" value="P:negative regulation of DNA-templated transcription"/>
    <property type="evidence" value="ECO:0000270"/>
    <property type="project" value="TAIR"/>
</dbReference>
<dbReference type="GO" id="GO:0006355">
    <property type="term" value="P:regulation of DNA-templated transcription"/>
    <property type="evidence" value="ECO:0000315"/>
    <property type="project" value="UniProtKB"/>
</dbReference>
<dbReference type="GO" id="GO:0009651">
    <property type="term" value="P:response to salt stress"/>
    <property type="evidence" value="ECO:0000315"/>
    <property type="project" value="TAIR"/>
</dbReference>
<dbReference type="FunFam" id="1.10.10.60:FF:000220">
    <property type="entry name" value="DEK domain-containing chromatin associated protein"/>
    <property type="match status" value="1"/>
</dbReference>
<dbReference type="Gene3D" id="1.10.10.60">
    <property type="entry name" value="Homeodomain-like"/>
    <property type="match status" value="1"/>
</dbReference>
<dbReference type="InterPro" id="IPR044198">
    <property type="entry name" value="DEK"/>
</dbReference>
<dbReference type="InterPro" id="IPR014876">
    <property type="entry name" value="DEK_C"/>
</dbReference>
<dbReference type="PANTHER" id="PTHR13468:SF22">
    <property type="entry name" value="DEK DOMAIN-CONTAINING CHROMATIN-ASSOCIATED PROTEIN 3"/>
    <property type="match status" value="1"/>
</dbReference>
<dbReference type="PANTHER" id="PTHR13468">
    <property type="entry name" value="DEK PROTEIN"/>
    <property type="match status" value="1"/>
</dbReference>
<dbReference type="Pfam" id="PF08766">
    <property type="entry name" value="DEK_C"/>
    <property type="match status" value="1"/>
</dbReference>
<dbReference type="SUPFAM" id="SSF109715">
    <property type="entry name" value="DEK C-terminal domain"/>
    <property type="match status" value="1"/>
</dbReference>
<dbReference type="PROSITE" id="PS51998">
    <property type="entry name" value="DEK_C"/>
    <property type="match status" value="1"/>
</dbReference>
<gene>
    <name evidence="8 9" type="primary">DEK3</name>
    <name evidence="11" type="ordered locus">At4g26630</name>
    <name evidence="12" type="ORF">T15N24.80</name>
</gene>
<proteinExistence type="evidence at protein level"/>
<comment type="function">
    <text evidence="7">Chromatin-associated protein which contributes to the modulation of chromatin structure (such as super-helical structure of DNA) and function (PubMed:25387881). Binds to chromatin of protein-coding genes throughout the genome to regulate nucleosome occupancy and chromatin accessibility, and to modulate the expression of target genes (PubMed:25387881). Negative regulator of stress tolerance (e.g. high salt) (PubMed:25387881).</text>
</comment>
<comment type="subunit">
    <text evidence="7">Found in a mRNA splicing-dependent exon junction complex (EJC) (PubMed:25387881). Binds specifically histones H3 and H4 (PubMed:25387881). Interacts with TOP1A, SCC3, At1g61730, At1g20940, At1g13930, DEK4, HDT1, NIT1, SHL, CYP19-1, GEBPL, HSP70-3, PDP2, PDP3, KIN2, RPL11A and PDS5A (PubMed:25387881).</text>
</comment>
<comment type="interaction">
    <interactant intactId="EBI-1787282">
        <id>Q9SUA1</id>
    </interactant>
    <interactant intactId="EBI-9397077">
        <id>O82265</id>
        <label>SCC3</label>
    </interactant>
    <organismsDiffer>false</organismsDiffer>
    <experiments>2</experiments>
</comment>
<comment type="subcellular location">
    <subcellularLocation>
        <location evidence="3 7">Nucleus</location>
    </subcellularLocation>
    <subcellularLocation>
        <location evidence="6">Nucleus</location>
        <location evidence="6">Nucleolus</location>
    </subcellularLocation>
    <text evidence="1 7">Associates with chromatin (PubMed:25387881). Enriched in regions where chromatin is decondensed or sparse in the interphase nuclei (By similarity).</text>
</comment>
<comment type="tissue specificity">
    <text evidence="7">Highly expressed in young seedlings.</text>
</comment>
<comment type="induction">
    <text evidence="7">Strongly and rapidly down-regulated by salt stress in shoots and roots.</text>
</comment>
<comment type="disruption phenotype">
    <text evidence="7">Increased expression of some target genes (e.g. TOP1A, EFS, MBD9, NUP160, DEK1, BIG, HB-1 and CMT3), but reduced expression of other target genes (e.g. HKL1 and PDS5) (PubMed:25387881). Increased salt stress tolerance leading to a better seed germination in high salt conditions (PubMed:25387881).</text>
</comment>
<comment type="sequence caution" evidence="10">
    <conflict type="erroneous initiation">
        <sequence resource="EMBL-CDS" id="AAM13123"/>
    </conflict>
    <text>Truncated N-terminus.</text>
</comment>
<comment type="sequence caution" evidence="10">
    <conflict type="frameshift">
        <sequence resource="EMBL-CDS" id="BAE98684"/>
    </conflict>
</comment>
<protein>
    <recommendedName>
        <fullName evidence="8">DEK domain-containing chromatin-associated protein 3</fullName>
        <shortName evidence="9">At-DEK3</shortName>
        <shortName evidence="8">AtDEK-3</shortName>
        <shortName evidence="8">Protein DEK 3</shortName>
    </recommendedName>
</protein>
<name>DEKP3_ARATH</name>
<accession>Q9SUA1</accession>
<accession>B9DFH7</accession>
<accession>Q0WN52</accession>
<accession>Q0WSS7</accession>
<accession>Q0WW14</accession>
<accession>Q8RWF6</accession>
<evidence type="ECO:0000250" key="1">
    <source>
        <dbReference type="UniProtKB" id="P35659"/>
    </source>
</evidence>
<evidence type="ECO:0000255" key="2"/>
<evidence type="ECO:0000255" key="3">
    <source>
        <dbReference type="PROSITE-ProRule" id="PRU00768"/>
    </source>
</evidence>
<evidence type="ECO:0000255" key="4">
    <source>
        <dbReference type="PROSITE-ProRule" id="PRU01342"/>
    </source>
</evidence>
<evidence type="ECO:0000256" key="5">
    <source>
        <dbReference type="SAM" id="MobiDB-lite"/>
    </source>
</evidence>
<evidence type="ECO:0000269" key="6">
    <source>
    </source>
</evidence>
<evidence type="ECO:0000269" key="7">
    <source>
    </source>
</evidence>
<evidence type="ECO:0000303" key="8">
    <source>
    </source>
</evidence>
<evidence type="ECO:0000303" key="9">
    <source>
    </source>
</evidence>
<evidence type="ECO:0000305" key="10"/>
<evidence type="ECO:0000312" key="11">
    <source>
        <dbReference type="Araport" id="AT4G26630"/>
    </source>
</evidence>
<evidence type="ECO:0000312" key="12">
    <source>
        <dbReference type="EMBL" id="CAB43859.1"/>
    </source>
</evidence>
<feature type="chain" id="PRO_0000453266" description="DEK domain-containing chromatin-associated protein 3">
    <location>
        <begin position="1"/>
        <end position="763"/>
    </location>
</feature>
<feature type="domain" description="DEK-C" evidence="4">
    <location>
        <begin position="676"/>
        <end position="731"/>
    </location>
</feature>
<feature type="DNA-binding region" evidence="1">
    <location>
        <begin position="694"/>
        <end position="708"/>
    </location>
</feature>
<feature type="DNA-binding region" evidence="1">
    <location>
        <begin position="723"/>
        <end position="727"/>
    </location>
</feature>
<feature type="region of interest" description="Disordered" evidence="5">
    <location>
        <begin position="1"/>
        <end position="324"/>
    </location>
</feature>
<feature type="region of interest" description="Disordered" evidence="5">
    <location>
        <begin position="458"/>
        <end position="681"/>
    </location>
</feature>
<feature type="region of interest" description="Disordered" evidence="5">
    <location>
        <begin position="730"/>
        <end position="763"/>
    </location>
</feature>
<feature type="coiled-coil region" evidence="2">
    <location>
        <begin position="60"/>
        <end position="96"/>
    </location>
</feature>
<feature type="coiled-coil region" evidence="2">
    <location>
        <begin position="214"/>
        <end position="286"/>
    </location>
</feature>
<feature type="coiled-coil region" evidence="2">
    <location>
        <begin position="513"/>
        <end position="551"/>
    </location>
</feature>
<feature type="coiled-coil region" evidence="2">
    <location>
        <begin position="723"/>
        <end position="753"/>
    </location>
</feature>
<feature type="short sequence motif" description="Nuclear localization signal 1" evidence="3">
    <location>
        <begin position="284"/>
        <end position="291"/>
    </location>
</feature>
<feature type="short sequence motif" description="Nuclear localization signal 2" evidence="3">
    <location>
        <begin position="483"/>
        <end position="490"/>
    </location>
</feature>
<feature type="compositionally biased region" description="Polar residues" evidence="5">
    <location>
        <begin position="11"/>
        <end position="20"/>
    </location>
</feature>
<feature type="compositionally biased region" description="Basic and acidic residues" evidence="5">
    <location>
        <begin position="32"/>
        <end position="44"/>
    </location>
</feature>
<feature type="compositionally biased region" description="Basic and acidic residues" evidence="5">
    <location>
        <begin position="72"/>
        <end position="97"/>
    </location>
</feature>
<feature type="compositionally biased region" description="Basic and acidic residues" evidence="5">
    <location>
        <begin position="124"/>
        <end position="172"/>
    </location>
</feature>
<feature type="compositionally biased region" description="Basic and acidic residues" evidence="5">
    <location>
        <begin position="180"/>
        <end position="242"/>
    </location>
</feature>
<feature type="compositionally biased region" description="Acidic residues" evidence="5">
    <location>
        <begin position="243"/>
        <end position="252"/>
    </location>
</feature>
<feature type="compositionally biased region" description="Basic and acidic residues" evidence="5">
    <location>
        <begin position="253"/>
        <end position="264"/>
    </location>
</feature>
<feature type="compositionally biased region" description="Acidic residues" evidence="5">
    <location>
        <begin position="265"/>
        <end position="277"/>
    </location>
</feature>
<feature type="compositionally biased region" description="Basic and acidic residues" evidence="5">
    <location>
        <begin position="295"/>
        <end position="311"/>
    </location>
</feature>
<feature type="compositionally biased region" description="Basic residues" evidence="5">
    <location>
        <begin position="475"/>
        <end position="484"/>
    </location>
</feature>
<feature type="compositionally biased region" description="Low complexity" evidence="5">
    <location>
        <begin position="485"/>
        <end position="496"/>
    </location>
</feature>
<feature type="compositionally biased region" description="Acidic residues" evidence="5">
    <location>
        <begin position="521"/>
        <end position="533"/>
    </location>
</feature>
<feature type="compositionally biased region" description="Basic and acidic residues" evidence="5">
    <location>
        <begin position="534"/>
        <end position="547"/>
    </location>
</feature>
<feature type="compositionally biased region" description="Acidic residues" evidence="5">
    <location>
        <begin position="557"/>
        <end position="578"/>
    </location>
</feature>
<feature type="compositionally biased region" description="Low complexity" evidence="5">
    <location>
        <begin position="606"/>
        <end position="615"/>
    </location>
</feature>
<feature type="compositionally biased region" description="Low complexity" evidence="5">
    <location>
        <begin position="650"/>
        <end position="660"/>
    </location>
</feature>
<feature type="compositionally biased region" description="Basic and acidic residues" evidence="5">
    <location>
        <begin position="661"/>
        <end position="681"/>
    </location>
</feature>
<feature type="compositionally biased region" description="Gly residues" evidence="5">
    <location>
        <begin position="753"/>
        <end position="763"/>
    </location>
</feature>
<feature type="sequence conflict" description="In Ref. 4; BAH19494." evidence="10" ref="4">
    <original>K</original>
    <variation>E</variation>
    <location>
        <position position="417"/>
    </location>
</feature>
<organism>
    <name type="scientific">Arabidopsis thaliana</name>
    <name type="common">Mouse-ear cress</name>
    <dbReference type="NCBI Taxonomy" id="3702"/>
    <lineage>
        <taxon>Eukaryota</taxon>
        <taxon>Viridiplantae</taxon>
        <taxon>Streptophyta</taxon>
        <taxon>Embryophyta</taxon>
        <taxon>Tracheophyta</taxon>
        <taxon>Spermatophyta</taxon>
        <taxon>Magnoliopsida</taxon>
        <taxon>eudicotyledons</taxon>
        <taxon>Gunneridae</taxon>
        <taxon>Pentapetalae</taxon>
        <taxon>rosids</taxon>
        <taxon>malvids</taxon>
        <taxon>Brassicales</taxon>
        <taxon>Brassicaceae</taxon>
        <taxon>Camelineae</taxon>
        <taxon>Arabidopsis</taxon>
    </lineage>
</organism>
<keyword id="KW-0156">Chromatin regulator</keyword>
<keyword id="KW-0175">Coiled coil</keyword>
<keyword id="KW-0238">DNA-binding</keyword>
<keyword id="KW-0539">Nucleus</keyword>
<keyword id="KW-1185">Reference proteome</keyword>
<keyword id="KW-0346">Stress response</keyword>
<keyword id="KW-0804">Transcription</keyword>
<keyword id="KW-0805">Transcription regulation</keyword>
<sequence>MGEDTKATIEPTANKTTSLEKPSEAMAGKENAGGKETQELAKDEDMAEPDNMEIDAQIKKDDEKAETEDKESEVKKNEDNAETQKMEEKVEVTKDEGQAEATNMDEDADGKKEQTDDGVSVEDTVMKENVESKDNNYAKDDEKETKETDITEADHKKAGKEDIQHEADKANGTKDGNTGDIKEEGTLVDEDKGTDMDEKVENGDENKQVENVEGKEKEDKEENKTKEVEAAKAEVDESKVEDEKEGSEDENDNEKVESKDAKEDEKEETNDDKEDEKEESKGSKKRGKGTSSGGKVREKNKTEEVKKDAEPRTPFSDRPVRERKSVERLVALIDKDSSKEFRVEKGRGAYLKDIPNVANKVMRKRSDETLKLLHPILFGGRRGKAAQIKTNILGFSGFVWHGDEKKAKEKVKEKLEKCTKEKLWEFCDVLDIHITKATTKKEDIITKLFEFLEKPHVTGDVTGDTTVSEKEKSSKGAKRKRTPKKTSPTAGSSSSKRSAKSQKKSEEATKVVKKSLAHSDDESEEEKEEEEKQEEEKAEEKEEKKEEENENGIPDKSEDEAPQPSESEEKDESEEHSEEETTKKKRGSRLSAGKKESAGRARNKKAVVAAKSSPPEKITQKRSSAKRKKTDDDSDTSPKASSKRKKSENPIKASPAPSKSASKEKPVKRAGKGKDKPSDKVLKNAIVEILKRVDFSTATFTDILKELAKEFTEDLTPRKSSIKMIIQEELTKLADEEEEEEKKEEDSEKEEAGGSGGGEEVKA</sequence>
<reference key="1">
    <citation type="journal article" date="1999" name="Nature">
        <title>Sequence and analysis of chromosome 4 of the plant Arabidopsis thaliana.</title>
        <authorList>
            <person name="Mayer K.F.X."/>
            <person name="Schueller C."/>
            <person name="Wambutt R."/>
            <person name="Murphy G."/>
            <person name="Volckaert G."/>
            <person name="Pohl T."/>
            <person name="Duesterhoeft A."/>
            <person name="Stiekema W."/>
            <person name="Entian K.-D."/>
            <person name="Terryn N."/>
            <person name="Harris B."/>
            <person name="Ansorge W."/>
            <person name="Brandt P."/>
            <person name="Grivell L.A."/>
            <person name="Rieger M."/>
            <person name="Weichselgartner M."/>
            <person name="de Simone V."/>
            <person name="Obermaier B."/>
            <person name="Mache R."/>
            <person name="Mueller M."/>
            <person name="Kreis M."/>
            <person name="Delseny M."/>
            <person name="Puigdomenech P."/>
            <person name="Watson M."/>
            <person name="Schmidtheini T."/>
            <person name="Reichert B."/>
            <person name="Portetelle D."/>
            <person name="Perez-Alonso M."/>
            <person name="Boutry M."/>
            <person name="Bancroft I."/>
            <person name="Vos P."/>
            <person name="Hoheisel J."/>
            <person name="Zimmermann W."/>
            <person name="Wedler H."/>
            <person name="Ridley P."/>
            <person name="Langham S.-A."/>
            <person name="McCullagh B."/>
            <person name="Bilham L."/>
            <person name="Robben J."/>
            <person name="van der Schueren J."/>
            <person name="Grymonprez B."/>
            <person name="Chuang Y.-J."/>
            <person name="Vandenbussche F."/>
            <person name="Braeken M."/>
            <person name="Weltjens I."/>
            <person name="Voet M."/>
            <person name="Bastiaens I."/>
            <person name="Aert R."/>
            <person name="Defoor E."/>
            <person name="Weitzenegger T."/>
            <person name="Bothe G."/>
            <person name="Ramsperger U."/>
            <person name="Hilbert H."/>
            <person name="Braun M."/>
            <person name="Holzer E."/>
            <person name="Brandt A."/>
            <person name="Peters S."/>
            <person name="van Staveren M."/>
            <person name="Dirkse W."/>
            <person name="Mooijman P."/>
            <person name="Klein Lankhorst R."/>
            <person name="Rose M."/>
            <person name="Hauf J."/>
            <person name="Koetter P."/>
            <person name="Berneiser S."/>
            <person name="Hempel S."/>
            <person name="Feldpausch M."/>
            <person name="Lamberth S."/>
            <person name="Van den Daele H."/>
            <person name="De Keyser A."/>
            <person name="Buysshaert C."/>
            <person name="Gielen J."/>
            <person name="Villarroel R."/>
            <person name="De Clercq R."/>
            <person name="van Montagu M."/>
            <person name="Rogers J."/>
            <person name="Cronin A."/>
            <person name="Quail M.A."/>
            <person name="Bray-Allen S."/>
            <person name="Clark L."/>
            <person name="Doggett J."/>
            <person name="Hall S."/>
            <person name="Kay M."/>
            <person name="Lennard N."/>
            <person name="McLay K."/>
            <person name="Mayes R."/>
            <person name="Pettett A."/>
            <person name="Rajandream M.A."/>
            <person name="Lyne M."/>
            <person name="Benes V."/>
            <person name="Rechmann S."/>
            <person name="Borkova D."/>
            <person name="Bloecker H."/>
            <person name="Scharfe M."/>
            <person name="Grimm M."/>
            <person name="Loehnert T.-H."/>
            <person name="Dose S."/>
            <person name="de Haan M."/>
            <person name="Maarse A.C."/>
            <person name="Schaefer M."/>
            <person name="Mueller-Auer S."/>
            <person name="Gabel C."/>
            <person name="Fuchs M."/>
            <person name="Fartmann B."/>
            <person name="Granderath K."/>
            <person name="Dauner D."/>
            <person name="Herzl A."/>
            <person name="Neumann S."/>
            <person name="Argiriou A."/>
            <person name="Vitale D."/>
            <person name="Liguori R."/>
            <person name="Piravandi E."/>
            <person name="Massenet O."/>
            <person name="Quigley F."/>
            <person name="Clabauld G."/>
            <person name="Muendlein A."/>
            <person name="Felber R."/>
            <person name="Schnabl S."/>
            <person name="Hiller R."/>
            <person name="Schmidt W."/>
            <person name="Lecharny A."/>
            <person name="Aubourg S."/>
            <person name="Chefdor F."/>
            <person name="Cooke R."/>
            <person name="Berger C."/>
            <person name="Monfort A."/>
            <person name="Casacuberta E."/>
            <person name="Gibbons T."/>
            <person name="Weber N."/>
            <person name="Vandenbol M."/>
            <person name="Bargues M."/>
            <person name="Terol J."/>
            <person name="Torres A."/>
            <person name="Perez-Perez A."/>
            <person name="Purnelle B."/>
            <person name="Bent E."/>
            <person name="Johnson S."/>
            <person name="Tacon D."/>
            <person name="Jesse T."/>
            <person name="Heijnen L."/>
            <person name="Schwarz S."/>
            <person name="Scholler P."/>
            <person name="Heber S."/>
            <person name="Francs P."/>
            <person name="Bielke C."/>
            <person name="Frishman D."/>
            <person name="Haase D."/>
            <person name="Lemcke K."/>
            <person name="Mewes H.-W."/>
            <person name="Stocker S."/>
            <person name="Zaccaria P."/>
            <person name="Bevan M."/>
            <person name="Wilson R.K."/>
            <person name="de la Bastide M."/>
            <person name="Habermann K."/>
            <person name="Parnell L."/>
            <person name="Dedhia N."/>
            <person name="Gnoj L."/>
            <person name="Schutz K."/>
            <person name="Huang E."/>
            <person name="Spiegel L."/>
            <person name="Sekhon M."/>
            <person name="Murray J."/>
            <person name="Sheet P."/>
            <person name="Cordes M."/>
            <person name="Abu-Threideh J."/>
            <person name="Stoneking T."/>
            <person name="Kalicki J."/>
            <person name="Graves T."/>
            <person name="Harmon G."/>
            <person name="Edwards J."/>
            <person name="Latreille P."/>
            <person name="Courtney L."/>
            <person name="Cloud J."/>
            <person name="Abbott A."/>
            <person name="Scott K."/>
            <person name="Johnson D."/>
            <person name="Minx P."/>
            <person name="Bentley D."/>
            <person name="Fulton B."/>
            <person name="Miller N."/>
            <person name="Greco T."/>
            <person name="Kemp K."/>
            <person name="Kramer J."/>
            <person name="Fulton L."/>
            <person name="Mardis E."/>
            <person name="Dante M."/>
            <person name="Pepin K."/>
            <person name="Hillier L.W."/>
            <person name="Nelson J."/>
            <person name="Spieth J."/>
            <person name="Ryan E."/>
            <person name="Andrews S."/>
            <person name="Geisel C."/>
            <person name="Layman D."/>
            <person name="Du H."/>
            <person name="Ali J."/>
            <person name="Berghoff A."/>
            <person name="Jones K."/>
            <person name="Drone K."/>
            <person name="Cotton M."/>
            <person name="Joshu C."/>
            <person name="Antonoiu B."/>
            <person name="Zidanic M."/>
            <person name="Strong C."/>
            <person name="Sun H."/>
            <person name="Lamar B."/>
            <person name="Yordan C."/>
            <person name="Ma P."/>
            <person name="Zhong J."/>
            <person name="Preston R."/>
            <person name="Vil D."/>
            <person name="Shekher M."/>
            <person name="Matero A."/>
            <person name="Shah R."/>
            <person name="Swaby I.K."/>
            <person name="O'Shaughnessy A."/>
            <person name="Rodriguez M."/>
            <person name="Hoffman J."/>
            <person name="Till S."/>
            <person name="Granat S."/>
            <person name="Shohdy N."/>
            <person name="Hasegawa A."/>
            <person name="Hameed A."/>
            <person name="Lodhi M."/>
            <person name="Johnson A."/>
            <person name="Chen E."/>
            <person name="Marra M.A."/>
            <person name="Martienssen R."/>
            <person name="McCombie W.R."/>
        </authorList>
    </citation>
    <scope>NUCLEOTIDE SEQUENCE [LARGE SCALE GENOMIC DNA]</scope>
    <source>
        <strain>cv. Columbia</strain>
    </source>
</reference>
<reference key="2">
    <citation type="journal article" date="2017" name="Plant J.">
        <title>Araport11: a complete reannotation of the Arabidopsis thaliana reference genome.</title>
        <authorList>
            <person name="Cheng C.Y."/>
            <person name="Krishnakumar V."/>
            <person name="Chan A.P."/>
            <person name="Thibaud-Nissen F."/>
            <person name="Schobel S."/>
            <person name="Town C.D."/>
        </authorList>
    </citation>
    <scope>GENOME REANNOTATION</scope>
    <source>
        <strain>cv. Columbia</strain>
    </source>
</reference>
<reference key="3">
    <citation type="submission" date="2006-07" db="EMBL/GenBank/DDBJ databases">
        <title>Large-scale analysis of RIKEN Arabidopsis full-length (RAFL) cDNAs.</title>
        <authorList>
            <person name="Totoki Y."/>
            <person name="Seki M."/>
            <person name="Ishida J."/>
            <person name="Nakajima M."/>
            <person name="Enju A."/>
            <person name="Kamiya A."/>
            <person name="Narusaka M."/>
            <person name="Shin-i T."/>
            <person name="Nakagawa M."/>
            <person name="Sakamoto N."/>
            <person name="Oishi K."/>
            <person name="Kohara Y."/>
            <person name="Kobayashi M."/>
            <person name="Toyoda A."/>
            <person name="Sakaki Y."/>
            <person name="Sakurai T."/>
            <person name="Iida K."/>
            <person name="Akiyama K."/>
            <person name="Satou M."/>
            <person name="Toyoda T."/>
            <person name="Konagaya A."/>
            <person name="Carninci P."/>
            <person name="Kawai J."/>
            <person name="Hayashizaki Y."/>
            <person name="Shinozaki K."/>
        </authorList>
    </citation>
    <scope>NUCLEOTIDE SEQUENCE [LARGE SCALE MRNA] OF 1-407</scope>
    <source>
        <strain>cv. Columbia</strain>
    </source>
</reference>
<reference key="4">
    <citation type="journal article" date="2009" name="DNA Res.">
        <title>Analysis of multiple occurrences of alternative splicing events in Arabidopsis thaliana using novel sequenced full-length cDNAs.</title>
        <authorList>
            <person name="Iida K."/>
            <person name="Fukami-Kobayashi K."/>
            <person name="Toyoda A."/>
            <person name="Sakaki Y."/>
            <person name="Kobayashi M."/>
            <person name="Seki M."/>
            <person name="Shinozaki K."/>
        </authorList>
    </citation>
    <scope>NUCLEOTIDE SEQUENCE [LARGE SCALE MRNA] OF 90-501</scope>
    <source>
        <strain>cv. Columbia</strain>
        <tissue>Rosette leaf</tissue>
    </source>
</reference>
<reference key="5">
    <citation type="journal article" date="2003" name="Science">
        <title>Empirical analysis of transcriptional activity in the Arabidopsis genome.</title>
        <authorList>
            <person name="Yamada K."/>
            <person name="Lim J."/>
            <person name="Dale J.M."/>
            <person name="Chen H."/>
            <person name="Shinn P."/>
            <person name="Palm C.J."/>
            <person name="Southwick A.M."/>
            <person name="Wu H.C."/>
            <person name="Kim C.J."/>
            <person name="Nguyen M."/>
            <person name="Pham P.K."/>
            <person name="Cheuk R.F."/>
            <person name="Karlin-Newmann G."/>
            <person name="Liu S.X."/>
            <person name="Lam B."/>
            <person name="Sakano H."/>
            <person name="Wu T."/>
            <person name="Yu G."/>
            <person name="Miranda M."/>
            <person name="Quach H.L."/>
            <person name="Tripp M."/>
            <person name="Chang C.H."/>
            <person name="Lee J.M."/>
            <person name="Toriumi M.J."/>
            <person name="Chan M.M."/>
            <person name="Tang C.C."/>
            <person name="Onodera C.S."/>
            <person name="Deng J.M."/>
            <person name="Akiyama K."/>
            <person name="Ansari Y."/>
            <person name="Arakawa T."/>
            <person name="Banh J."/>
            <person name="Banno F."/>
            <person name="Bowser L."/>
            <person name="Brooks S.Y."/>
            <person name="Carninci P."/>
            <person name="Chao Q."/>
            <person name="Choy N."/>
            <person name="Enju A."/>
            <person name="Goldsmith A.D."/>
            <person name="Gurjal M."/>
            <person name="Hansen N.F."/>
            <person name="Hayashizaki Y."/>
            <person name="Johnson-Hopson C."/>
            <person name="Hsuan V.W."/>
            <person name="Iida K."/>
            <person name="Karnes M."/>
            <person name="Khan S."/>
            <person name="Koesema E."/>
            <person name="Ishida J."/>
            <person name="Jiang P.X."/>
            <person name="Jones T."/>
            <person name="Kawai J."/>
            <person name="Kamiya A."/>
            <person name="Meyers C."/>
            <person name="Nakajima M."/>
            <person name="Narusaka M."/>
            <person name="Seki M."/>
            <person name="Sakurai T."/>
            <person name="Satou M."/>
            <person name="Tamse R."/>
            <person name="Vaysberg M."/>
            <person name="Wallender E.K."/>
            <person name="Wong C."/>
            <person name="Yamamura Y."/>
            <person name="Yuan S."/>
            <person name="Shinozaki K."/>
            <person name="Davis R.W."/>
            <person name="Theologis A."/>
            <person name="Ecker J.R."/>
        </authorList>
    </citation>
    <scope>NUCLEOTIDE SEQUENCE [LARGE SCALE MRNA] OF 240-763</scope>
    <source>
        <strain>cv. Columbia</strain>
    </source>
</reference>
<reference key="6">
    <citation type="journal article" date="2005" name="Mol. Biol. Cell">
        <title>Proteomic analysis of the Arabidopsis nucleolus suggests novel nucleolar functions.</title>
        <authorList>
            <person name="Pendle A.F."/>
            <person name="Clark G.P."/>
            <person name="Boon R."/>
            <person name="Lewandowska D."/>
            <person name="Lam Y.W."/>
            <person name="Andersen J."/>
            <person name="Mann M."/>
            <person name="Lamond A.I."/>
            <person name="Brown J.W."/>
            <person name="Shaw P.J."/>
        </authorList>
    </citation>
    <scope>IDENTIFICATION BY MASS SPECTROMETRY</scope>
    <scope>SUBCELLULAR LOCATION</scope>
    <scope>GENE FAMILY</scope>
    <scope>NOMENCLATURE</scope>
</reference>
<reference key="7">
    <citation type="journal article" date="2009" name="J. Proteomics">
        <title>Phosphoproteomic analysis of nuclei-enriched fractions from Arabidopsis thaliana.</title>
        <authorList>
            <person name="Jones A.M.E."/>
            <person name="MacLean D."/>
            <person name="Studholme D.J."/>
            <person name="Serna-Sanz A."/>
            <person name="Andreasson E."/>
            <person name="Rathjen J.P."/>
            <person name="Peck S.C."/>
        </authorList>
    </citation>
    <scope>IDENTIFICATION BY MASS SPECTROMETRY [LARGE SCALE ANALYSIS]</scope>
</reference>
<reference key="8">
    <citation type="journal article" date="2009" name="Plant Physiol.">
        <title>Large-scale Arabidopsis phosphoproteome profiling reveals novel chloroplast kinase substrates and phosphorylation networks.</title>
        <authorList>
            <person name="Reiland S."/>
            <person name="Messerli G."/>
            <person name="Baerenfaller K."/>
            <person name="Gerrits B."/>
            <person name="Endler A."/>
            <person name="Grossmann J."/>
            <person name="Gruissem W."/>
            <person name="Baginsky S."/>
        </authorList>
    </citation>
    <scope>IDENTIFICATION BY MASS SPECTROMETRY [LARGE SCALE ANALYSIS]</scope>
</reference>
<reference key="9">
    <citation type="journal article" date="2014" name="Plant Cell">
        <title>A DEK domain-containing protein modulates chromatin structure and function in Arabidopsis.</title>
        <authorList>
            <person name="Waidmann S."/>
            <person name="Kusenda B."/>
            <person name="Mayerhofer J."/>
            <person name="Mechtler K."/>
            <person name="Jonak C."/>
        </authorList>
    </citation>
    <scope>FUNCTION</scope>
    <scope>DISRUPTION PHENOTYPE</scope>
    <scope>SUBCELLULAR LOCATION</scope>
    <scope>INTERACTION WITH TOP1A; SCC3; AT1G61730; AT1G20940; AT1G13930; DEK4; HDT1; SHL; NIT1; CYP19-1; GEBPL; PDP2; PDP3; HSP70-3; PDS5A; KIN2; RPL11A; HISTONE-H3 AND HISTONE-H4</scope>
    <scope>TISSUE SPECIFICITY</scope>
    <scope>REPRESSION BY SALT STRESS</scope>
    <source>
        <strain>cv. Columbia</strain>
    </source>
</reference>